<protein>
    <recommendedName>
        <fullName evidence="12">WASH complex subunit 5</fullName>
    </recommendedName>
    <alternativeName>
        <fullName>Strumpellin</fullName>
    </alternativeName>
    <alternativeName>
        <fullName evidence="11">WASH complex subunit strumpellin</fullName>
    </alternativeName>
</protein>
<keyword id="KW-0963">Cytoplasm</keyword>
<keyword id="KW-0225">Disease variant</keyword>
<keyword id="KW-0256">Endoplasmic reticulum</keyword>
<keyword id="KW-0967">Endosome</keyword>
<keyword id="KW-0890">Hereditary spastic paraplegia</keyword>
<keyword id="KW-0991">Intellectual disability</keyword>
<keyword id="KW-0523">Neurodegeneration</keyword>
<keyword id="KW-0597">Phosphoprotein</keyword>
<keyword id="KW-0653">Protein transport</keyword>
<keyword id="KW-1267">Proteomics identification</keyword>
<keyword id="KW-1185">Reference proteome</keyword>
<keyword id="KW-0813">Transport</keyword>
<accession>Q12768</accession>
<accession>A8K4R7</accession>
<accession>Q3KQX5</accession>
<accession>Q8TBQ2</accession>
<dbReference type="EMBL" id="D83780">
    <property type="protein sequence ID" value="BAA12109.2"/>
    <property type="status" value="ALT_INIT"/>
    <property type="molecule type" value="mRNA"/>
</dbReference>
<dbReference type="EMBL" id="AK291032">
    <property type="protein sequence ID" value="BAF83721.1"/>
    <property type="molecule type" value="mRNA"/>
</dbReference>
<dbReference type="EMBL" id="CH471060">
    <property type="protein sequence ID" value="EAW92081.1"/>
    <property type="molecule type" value="Genomic_DNA"/>
</dbReference>
<dbReference type="EMBL" id="BC026951">
    <property type="protein sequence ID" value="AAH26951.1"/>
    <property type="molecule type" value="mRNA"/>
</dbReference>
<dbReference type="EMBL" id="BC106015">
    <property type="protein sequence ID" value="AAI06016.1"/>
    <property type="molecule type" value="mRNA"/>
</dbReference>
<dbReference type="CCDS" id="CCDS6355.1"/>
<dbReference type="RefSeq" id="NP_055661.3">
    <property type="nucleotide sequence ID" value="NM_014846.3"/>
</dbReference>
<dbReference type="RefSeq" id="XP_016869602.1">
    <property type="nucleotide sequence ID" value="XM_017014113.1"/>
</dbReference>
<dbReference type="RefSeq" id="XP_047278458.1">
    <property type="nucleotide sequence ID" value="XM_047422502.1"/>
</dbReference>
<dbReference type="RefSeq" id="XP_054217612.1">
    <property type="nucleotide sequence ID" value="XM_054361637.1"/>
</dbReference>
<dbReference type="SMR" id="Q12768"/>
<dbReference type="BioGRID" id="115226">
    <property type="interactions" value="118"/>
</dbReference>
<dbReference type="ComplexPortal" id="CPX-1163">
    <property type="entry name" value="WASH complex, variant WASHC1/WASHC2C"/>
</dbReference>
<dbReference type="ComplexPortal" id="CPX-1168">
    <property type="entry name" value="WASH complex, variant WASH2P/WASHC2C"/>
</dbReference>
<dbReference type="ComplexPortal" id="CPX-1169">
    <property type="entry name" value="WASH complex, variant WASH3P/WASHC2C"/>
</dbReference>
<dbReference type="ComplexPortal" id="CPX-1170">
    <property type="entry name" value="WASH complex, variant WASH4P/WASHC2C"/>
</dbReference>
<dbReference type="ComplexPortal" id="CPX-1171">
    <property type="entry name" value="WASH complex, variant WASH6P/WASHC2C"/>
</dbReference>
<dbReference type="ComplexPortal" id="CPX-1172">
    <property type="entry name" value="WASH complex, variant WASHC1/WASHC2A"/>
</dbReference>
<dbReference type="ComplexPortal" id="CPX-1173">
    <property type="entry name" value="WASH complex, variant WASH2P/WASHC2A"/>
</dbReference>
<dbReference type="ComplexPortal" id="CPX-1174">
    <property type="entry name" value="WASH complex, variant WASH3P/WASHC2A"/>
</dbReference>
<dbReference type="ComplexPortal" id="CPX-1175">
    <property type="entry name" value="WASH complex, variant WASH4P/WASHC2A"/>
</dbReference>
<dbReference type="ComplexPortal" id="CPX-1176">
    <property type="entry name" value="WASH complex, variant WASH6P/WASHC2A"/>
</dbReference>
<dbReference type="CORUM" id="Q12768"/>
<dbReference type="FunCoup" id="Q12768">
    <property type="interactions" value="3362"/>
</dbReference>
<dbReference type="IntAct" id="Q12768">
    <property type="interactions" value="69"/>
</dbReference>
<dbReference type="MINT" id="Q12768"/>
<dbReference type="STRING" id="9606.ENSP00000318016"/>
<dbReference type="GlyGen" id="Q12768">
    <property type="glycosylation" value="3 sites, 1 O-linked glycan (3 sites)"/>
</dbReference>
<dbReference type="iPTMnet" id="Q12768"/>
<dbReference type="MetOSite" id="Q12768"/>
<dbReference type="PhosphoSitePlus" id="Q12768"/>
<dbReference type="SwissPalm" id="Q12768"/>
<dbReference type="BioMuta" id="WASHC5"/>
<dbReference type="DMDM" id="2495719"/>
<dbReference type="jPOST" id="Q12768"/>
<dbReference type="MassIVE" id="Q12768"/>
<dbReference type="PaxDb" id="9606-ENSP00000318016"/>
<dbReference type="PeptideAtlas" id="Q12768"/>
<dbReference type="ProteomicsDB" id="58911"/>
<dbReference type="Pumba" id="Q12768"/>
<dbReference type="Antibodypedia" id="56103">
    <property type="antibodies" value="54 antibodies from 17 providers"/>
</dbReference>
<dbReference type="DNASU" id="9897"/>
<dbReference type="Ensembl" id="ENST00000318410.12">
    <property type="protein sequence ID" value="ENSP00000318016.7"/>
    <property type="gene ID" value="ENSG00000164961.16"/>
</dbReference>
<dbReference type="GeneID" id="9897"/>
<dbReference type="KEGG" id="hsa:9897"/>
<dbReference type="MANE-Select" id="ENST00000318410.12">
    <property type="protein sequence ID" value="ENSP00000318016.7"/>
    <property type="RefSeq nucleotide sequence ID" value="NM_014846.4"/>
    <property type="RefSeq protein sequence ID" value="NP_055661.3"/>
</dbReference>
<dbReference type="UCSC" id="uc003yrt.4">
    <property type="organism name" value="human"/>
</dbReference>
<dbReference type="AGR" id="HGNC:28984"/>
<dbReference type="CTD" id="9897"/>
<dbReference type="DisGeNET" id="9897"/>
<dbReference type="GeneCards" id="WASHC5"/>
<dbReference type="GeneReviews" id="WASHC5"/>
<dbReference type="HGNC" id="HGNC:28984">
    <property type="gene designation" value="WASHC5"/>
</dbReference>
<dbReference type="HPA" id="ENSG00000164961">
    <property type="expression patterns" value="Low tissue specificity"/>
</dbReference>
<dbReference type="MalaCards" id="WASHC5"/>
<dbReference type="MIM" id="220210">
    <property type="type" value="phenotype"/>
</dbReference>
<dbReference type="MIM" id="603563">
    <property type="type" value="phenotype"/>
</dbReference>
<dbReference type="MIM" id="610657">
    <property type="type" value="gene"/>
</dbReference>
<dbReference type="neXtProt" id="NX_Q12768"/>
<dbReference type="OpenTargets" id="ENSG00000164961"/>
<dbReference type="Orphanet" id="7">
    <property type="disease" value="3C syndrome"/>
</dbReference>
<dbReference type="Orphanet" id="100989">
    <property type="disease" value="Autosomal dominant spastic paraplegia type 8"/>
</dbReference>
<dbReference type="PharmGKB" id="PA142671624"/>
<dbReference type="VEuPathDB" id="HostDB:ENSG00000164961"/>
<dbReference type="eggNOG" id="KOG3666">
    <property type="taxonomic scope" value="Eukaryota"/>
</dbReference>
<dbReference type="GeneTree" id="ENSGT00390000011137"/>
<dbReference type="HOGENOM" id="CLU_004021_1_0_1"/>
<dbReference type="InParanoid" id="Q12768"/>
<dbReference type="OMA" id="FFPDNWV"/>
<dbReference type="OrthoDB" id="565118at2759"/>
<dbReference type="PAN-GO" id="Q12768">
    <property type="GO annotations" value="6 GO annotations based on evolutionary models"/>
</dbReference>
<dbReference type="PhylomeDB" id="Q12768"/>
<dbReference type="TreeFam" id="TF314480"/>
<dbReference type="PathwayCommons" id="Q12768"/>
<dbReference type="SignaLink" id="Q12768"/>
<dbReference type="SIGNOR" id="Q12768"/>
<dbReference type="BioGRID-ORCS" id="9897">
    <property type="hits" value="66 hits in 1157 CRISPR screens"/>
</dbReference>
<dbReference type="CD-CODE" id="FB4E32DD">
    <property type="entry name" value="Presynaptic clusters and postsynaptic densities"/>
</dbReference>
<dbReference type="ChiTaRS" id="WASHC5">
    <property type="organism name" value="human"/>
</dbReference>
<dbReference type="GeneWiki" id="KIAA0196"/>
<dbReference type="GenomeRNAi" id="9897"/>
<dbReference type="Pharos" id="Q12768">
    <property type="development level" value="Tbio"/>
</dbReference>
<dbReference type="PRO" id="PR:Q12768"/>
<dbReference type="Proteomes" id="UP000005640">
    <property type="component" value="Chromosome 8"/>
</dbReference>
<dbReference type="RNAct" id="Q12768">
    <property type="molecule type" value="protein"/>
</dbReference>
<dbReference type="Bgee" id="ENSG00000164961">
    <property type="expression patterns" value="Expressed in corpus callosum and 194 other cell types or tissues"/>
</dbReference>
<dbReference type="ExpressionAtlas" id="Q12768">
    <property type="expression patterns" value="baseline and differential"/>
</dbReference>
<dbReference type="GO" id="GO:0005829">
    <property type="term" value="C:cytosol"/>
    <property type="evidence" value="ECO:0007669"/>
    <property type="project" value="UniProtKB-SubCell"/>
</dbReference>
<dbReference type="GO" id="GO:0005769">
    <property type="term" value="C:early endosome"/>
    <property type="evidence" value="ECO:0000314"/>
    <property type="project" value="UniProtKB"/>
</dbReference>
<dbReference type="GO" id="GO:0031901">
    <property type="term" value="C:early endosome membrane"/>
    <property type="evidence" value="ECO:0000303"/>
    <property type="project" value="ComplexPortal"/>
</dbReference>
<dbReference type="GO" id="GO:0005783">
    <property type="term" value="C:endoplasmic reticulum"/>
    <property type="evidence" value="ECO:0007669"/>
    <property type="project" value="UniProtKB-SubCell"/>
</dbReference>
<dbReference type="GO" id="GO:0005768">
    <property type="term" value="C:endosome"/>
    <property type="evidence" value="ECO:0000314"/>
    <property type="project" value="MGI"/>
</dbReference>
<dbReference type="GO" id="GO:0043025">
    <property type="term" value="C:neuronal cell body"/>
    <property type="evidence" value="ECO:0007669"/>
    <property type="project" value="Ensembl"/>
</dbReference>
<dbReference type="GO" id="GO:0071203">
    <property type="term" value="C:WASH complex"/>
    <property type="evidence" value="ECO:0000314"/>
    <property type="project" value="UniProtKB"/>
</dbReference>
<dbReference type="GO" id="GO:0030041">
    <property type="term" value="P:actin filament polymerization"/>
    <property type="evidence" value="ECO:0000318"/>
    <property type="project" value="GO_Central"/>
</dbReference>
<dbReference type="GO" id="GO:0016197">
    <property type="term" value="P:endosomal transport"/>
    <property type="evidence" value="ECO:0000315"/>
    <property type="project" value="MGI"/>
</dbReference>
<dbReference type="GO" id="GO:0140285">
    <property type="term" value="P:endosome fission"/>
    <property type="evidence" value="ECO:0000318"/>
    <property type="project" value="GO_Central"/>
</dbReference>
<dbReference type="GO" id="GO:0007032">
    <property type="term" value="P:endosome organization"/>
    <property type="evidence" value="ECO:0000318"/>
    <property type="project" value="GO_Central"/>
</dbReference>
<dbReference type="GO" id="GO:0007040">
    <property type="term" value="P:lysosome organization"/>
    <property type="evidence" value="ECO:0007669"/>
    <property type="project" value="Ensembl"/>
</dbReference>
<dbReference type="GO" id="GO:0090306">
    <property type="term" value="P:meiotic spindle assembly"/>
    <property type="evidence" value="ECO:0007669"/>
    <property type="project" value="Ensembl"/>
</dbReference>
<dbReference type="GO" id="GO:0001556">
    <property type="term" value="P:oocyte maturation"/>
    <property type="evidence" value="ECO:0007669"/>
    <property type="project" value="Ensembl"/>
</dbReference>
<dbReference type="GO" id="GO:0040038">
    <property type="term" value="P:polar body extrusion after meiotic divisions"/>
    <property type="evidence" value="ECO:0007669"/>
    <property type="project" value="Ensembl"/>
</dbReference>
<dbReference type="GO" id="GO:0010976">
    <property type="term" value="P:positive regulation of neuron projection development"/>
    <property type="evidence" value="ECO:0007669"/>
    <property type="project" value="Ensembl"/>
</dbReference>
<dbReference type="GO" id="GO:0015031">
    <property type="term" value="P:protein transport"/>
    <property type="evidence" value="ECO:0007669"/>
    <property type="project" value="UniProtKB-KW"/>
</dbReference>
<dbReference type="GO" id="GO:0031503">
    <property type="term" value="P:protein-containing complex localization"/>
    <property type="evidence" value="ECO:0007669"/>
    <property type="project" value="Ensembl"/>
</dbReference>
<dbReference type="GO" id="GO:0051125">
    <property type="term" value="P:regulation of actin nucleation"/>
    <property type="evidence" value="ECO:0000318"/>
    <property type="project" value="GO_Central"/>
</dbReference>
<dbReference type="GO" id="GO:0034315">
    <property type="term" value="P:regulation of Arp2/3 complex-mediated actin nucleation"/>
    <property type="evidence" value="ECO:0000303"/>
    <property type="project" value="ComplexPortal"/>
</dbReference>
<dbReference type="GO" id="GO:0097494">
    <property type="term" value="P:regulation of vesicle size"/>
    <property type="evidence" value="ECO:0007669"/>
    <property type="project" value="Ensembl"/>
</dbReference>
<dbReference type="InterPro" id="IPR019393">
    <property type="entry name" value="WASH_strumpellin"/>
</dbReference>
<dbReference type="PANTHER" id="PTHR15691">
    <property type="entry name" value="WASH COMPLEX SUBUNIT 5"/>
    <property type="match status" value="1"/>
</dbReference>
<dbReference type="PANTHER" id="PTHR15691:SF6">
    <property type="entry name" value="WASH COMPLEX SUBUNIT 5"/>
    <property type="match status" value="1"/>
</dbReference>
<dbReference type="Pfam" id="PF10266">
    <property type="entry name" value="Strumpellin"/>
    <property type="match status" value="1"/>
</dbReference>
<comment type="function">
    <text evidence="2 4 5 7">Acts as a component of the WASH core complex that functions as a nucleation-promoting factor (NPF) at the surface of endosomes, where it recruits and activates the Arp2/3 complex to induce actin polymerization, playing a key role in the fission of tubules that serve as transport intermediates during endosome sorting (PubMed:19922875, PubMed:20498093). May be involved in axonal outgrowth. Involved in cellular localization of ADRB2 (PubMed:23085491). Involved in cellular trafficking of BLOC-1 complex cargos such as ATP7A and VAMP7 (PubMed:23676666).</text>
</comment>
<comment type="subunit">
    <text evidence="2 3 4 7">Component of the WASH core complex also described as WASH regulatory complex (SHRC) composed of WASH (WASHC1, WASH2P or WASH3P), WASHC2 (WASHC2A or WASHC2C), WASHC3, WASHC4 and WASHC5. The WASH core complex associates via WASHC2 with the F-actin-capping protein dimer (formed by CAPZA1, CAPZA2 or CAPZA3 and CAPZB) in a transient or substoichiometric manner which was initially described as WASH complex. Interacts with VCP, PI4K2A.</text>
</comment>
<comment type="interaction">
    <interactant intactId="EBI-2563794">
        <id>Q12768</id>
    </interactant>
    <interactant intactId="EBI-2822329">
        <id>Q13596</id>
        <label>SNX1</label>
    </interactant>
    <organismsDiffer>false</organismsDiffer>
    <experiments>2</experiments>
</comment>
<comment type="subcellular location">
    <subcellularLocation>
        <location evidence="4">Cytoplasm</location>
        <location evidence="4">Cytosol</location>
    </subcellularLocation>
    <subcellularLocation>
        <location evidence="4">Endoplasmic reticulum</location>
    </subcellularLocation>
    <subcellularLocation>
        <location evidence="5 7">Early endosome</location>
    </subcellularLocation>
    <text evidence="4">Colocalizes with SYP/synaptophysin in the external molecular layer of the dentate gyrus and in motoneurons of the ventral horn of spinal cord.</text>
</comment>
<comment type="tissue specificity">
    <text evidence="4">Expressed ubiquitously.</text>
</comment>
<comment type="disease" evidence="1 4 5 6 8 10">
    <disease id="DI-01038">
        <name>Spastic paraplegia 8, autosomal dominant</name>
        <acronym>SPG8</acronym>
        <description>A form of spastic paraplegia, a neurodegenerative disorder characterized by a slow, gradual, progressive weakness and spasticity of the lower limbs. Rate of progression and the severity of symptoms are quite variable. Initial symptoms may include difficulty with balance, weakness and stiffness in the legs, muscle spasms, and dragging the toes when walking. In some forms of the disorder, bladder symptoms (such as incontinence) may appear, or the weakness and stiffness may spread to other parts of the body.</description>
        <dbReference type="MIM" id="603563"/>
    </disease>
    <text>The disease is caused by variants affecting the gene represented in this entry.</text>
</comment>
<comment type="disease" evidence="9">
    <disease id="DI-04011">
        <name>Ritscher-Schinzel syndrome 1</name>
        <acronym>RTSC1</acronym>
        <description>A developmental malformation syndrome characterized by craniofacial abnormalities, congenital heart defects, and cerebellar brain malformations. Facial features include prominent occiput, prominent forehead, low-set ears, downslanting palpebral fissures, depressed nasal bridge, and micrognathia. Cardiac defects can include septal defects and aortic stenosis, among others, and brain imaging shows Dandy-Walker malformation, cerebellar vermis hypoplasia, posterior fossa cysts, and ventricular dilatation. Affected individuals have severe developmental delay.</description>
        <dbReference type="MIM" id="220210"/>
    </disease>
    <text>The disease is caused by variants affecting the gene represented in this entry.</text>
</comment>
<comment type="similarity">
    <text evidence="11">Belongs to the strumpellin family.</text>
</comment>
<comment type="caution">
    <text evidence="2 3">One study reported a nucleation-promoting factor (NPF) activity towards the Arp2/3 complex using partially purified samples of the WASH complex (PubMed:19922875). In another study, the in vitro reconstituted and purified recombinant WASH core complex, consisting of WASHC3, WASHC4, WASHC5, WASHC1 and the N-terminal residues 1-356 of WASHC2, did not show activity toward Arp2/3 complex (PubMed:20498093).</text>
</comment>
<comment type="sequence caution" evidence="11">
    <conflict type="erroneous initiation">
        <sequence resource="EMBL-CDS" id="BAA12109"/>
    </conflict>
</comment>
<sequence>MLDFLAENNLCGQAILRIVSCGNAIIAELLRLSEFIPAVFRLKDRADQQKYGDIIFDFSYFKGPELWESKLDAKPELQDLDEEFRENNIEIVTRFYLAFQSVHKYIVDLNRYLDDLNEGVYIQQTLETVLLNEDGKQLLCEALYLYGVMLLVIDQKIEGEVRERMLVSYYRYSAARSSADSNMDDICKLLRSTGYSSQPGAKRPSNYPESYFQRVPINESFISMVIGRLRSDDIYNQVSAYPLPEHRSTALANQAAMLYVILYFEPSILHTHQAKMREIVDKYFPDNWVISIYMGITVNLVDAWEPYKAAKTALNNTLDLSNVREQASRYATVSERVHAQVQQFLKEGYLREEMVLDNIPKLLNCLRDCNVAIRWLMLHTADSACDPNNKRLRQIKDQILTDSRYNPRILFQLLLDTAQFEFILKEMFKQMLSEKQTKWEHYKKEGSERMTELADVFSGVKPLTRVEKNENLQAWFREISKQILSLNYDDSTAAGRKTVQLIQALEEVQEFHQLESNLQVCQFLADTRKFLHQMIRTINIKEEVLITMQIVGDLSFAWQLIDSFTSIMQESIRVNPSMVTKLRATFLKLASALDLPLLRINQANSPDLLSVSQYYSGELVSYVRKVLQIIPESMFTSLLKIIKLQTHDIIEVPTRLDKDKLRDYAQLGPRYEVAKLTHAISIFTEGILMMKTTLVGIIKVDPKQLLEDGIRKELVKRVAFALHRGLIFNPRAKPSELMPKLKELGATMDGFHRSFEYIQDYVNIYGLKIWQEEVSRIINYNVEQECNNFLRTKIQDWQSMYQSTHIPIPKFTPVDESVTFIGRLCREILRITDPKMTCHIDQLNTWYDMKTHQEVTSSRLFSEIQTTLGTFGLNGLDRLLCFMIVKELQNFLSMFQKIILRDRTVQDTLKTLMNAVSPLKSIVANSNKIYFSAIAKTQKIWTAYLEAIMKVGQMQILRQQIANELNYSCRFDSKHLAAALENLNKALLADIEAHYQDPSLPYPKEDNTLLYEITAYLEAAGIHNPLNKIYITTKRLPYFPIVNFLFLIAQLPKLQYNKNLGMVCRKPTDPVDWPPLVLGLLTLLKQFHSRYTEQFLALIGQFICSTVEQCTSQKIPEIPADVVGALLFLEDYVRYTKLPRRVAEAHVPNFIFDEFRTVL</sequence>
<reference key="1">
    <citation type="journal article" date="1996" name="DNA Res.">
        <title>Prediction of the coding sequences of unidentified human genes. V. The coding sequences of 40 new genes (KIAA0161-KIAA0200) deduced by analysis of cDNA clones from human cell line KG-1.</title>
        <authorList>
            <person name="Nagase T."/>
            <person name="Seki N."/>
            <person name="Ishikawa K."/>
            <person name="Tanaka A."/>
            <person name="Nomura N."/>
        </authorList>
    </citation>
    <scope>NUCLEOTIDE SEQUENCE [LARGE SCALE MRNA]</scope>
    <source>
        <tissue>Bone marrow</tissue>
    </source>
</reference>
<reference key="2">
    <citation type="journal article" date="2004" name="Nat. Genet.">
        <title>Complete sequencing and characterization of 21,243 full-length human cDNAs.</title>
        <authorList>
            <person name="Ota T."/>
            <person name="Suzuki Y."/>
            <person name="Nishikawa T."/>
            <person name="Otsuki T."/>
            <person name="Sugiyama T."/>
            <person name="Irie R."/>
            <person name="Wakamatsu A."/>
            <person name="Hayashi K."/>
            <person name="Sato H."/>
            <person name="Nagai K."/>
            <person name="Kimura K."/>
            <person name="Makita H."/>
            <person name="Sekine M."/>
            <person name="Obayashi M."/>
            <person name="Nishi T."/>
            <person name="Shibahara T."/>
            <person name="Tanaka T."/>
            <person name="Ishii S."/>
            <person name="Yamamoto J."/>
            <person name="Saito K."/>
            <person name="Kawai Y."/>
            <person name="Isono Y."/>
            <person name="Nakamura Y."/>
            <person name="Nagahari K."/>
            <person name="Murakami K."/>
            <person name="Yasuda T."/>
            <person name="Iwayanagi T."/>
            <person name="Wagatsuma M."/>
            <person name="Shiratori A."/>
            <person name="Sudo H."/>
            <person name="Hosoiri T."/>
            <person name="Kaku Y."/>
            <person name="Kodaira H."/>
            <person name="Kondo H."/>
            <person name="Sugawara M."/>
            <person name="Takahashi M."/>
            <person name="Kanda K."/>
            <person name="Yokoi T."/>
            <person name="Furuya T."/>
            <person name="Kikkawa E."/>
            <person name="Omura Y."/>
            <person name="Abe K."/>
            <person name="Kamihara K."/>
            <person name="Katsuta N."/>
            <person name="Sato K."/>
            <person name="Tanikawa M."/>
            <person name="Yamazaki M."/>
            <person name="Ninomiya K."/>
            <person name="Ishibashi T."/>
            <person name="Yamashita H."/>
            <person name="Murakawa K."/>
            <person name="Fujimori K."/>
            <person name="Tanai H."/>
            <person name="Kimata M."/>
            <person name="Watanabe M."/>
            <person name="Hiraoka S."/>
            <person name="Chiba Y."/>
            <person name="Ishida S."/>
            <person name="Ono Y."/>
            <person name="Takiguchi S."/>
            <person name="Watanabe S."/>
            <person name="Yosida M."/>
            <person name="Hotuta T."/>
            <person name="Kusano J."/>
            <person name="Kanehori K."/>
            <person name="Takahashi-Fujii A."/>
            <person name="Hara H."/>
            <person name="Tanase T.-O."/>
            <person name="Nomura Y."/>
            <person name="Togiya S."/>
            <person name="Komai F."/>
            <person name="Hara R."/>
            <person name="Takeuchi K."/>
            <person name="Arita M."/>
            <person name="Imose N."/>
            <person name="Musashino K."/>
            <person name="Yuuki H."/>
            <person name="Oshima A."/>
            <person name="Sasaki N."/>
            <person name="Aotsuka S."/>
            <person name="Yoshikawa Y."/>
            <person name="Matsunawa H."/>
            <person name="Ichihara T."/>
            <person name="Shiohata N."/>
            <person name="Sano S."/>
            <person name="Moriya S."/>
            <person name="Momiyama H."/>
            <person name="Satoh N."/>
            <person name="Takami S."/>
            <person name="Terashima Y."/>
            <person name="Suzuki O."/>
            <person name="Nakagawa S."/>
            <person name="Senoh A."/>
            <person name="Mizoguchi H."/>
            <person name="Goto Y."/>
            <person name="Shimizu F."/>
            <person name="Wakebe H."/>
            <person name="Hishigaki H."/>
            <person name="Watanabe T."/>
            <person name="Sugiyama A."/>
            <person name="Takemoto M."/>
            <person name="Kawakami B."/>
            <person name="Yamazaki M."/>
            <person name="Watanabe K."/>
            <person name="Kumagai A."/>
            <person name="Itakura S."/>
            <person name="Fukuzumi Y."/>
            <person name="Fujimori Y."/>
            <person name="Komiyama M."/>
            <person name="Tashiro H."/>
            <person name="Tanigami A."/>
            <person name="Fujiwara T."/>
            <person name="Ono T."/>
            <person name="Yamada K."/>
            <person name="Fujii Y."/>
            <person name="Ozaki K."/>
            <person name="Hirao M."/>
            <person name="Ohmori Y."/>
            <person name="Kawabata A."/>
            <person name="Hikiji T."/>
            <person name="Kobatake N."/>
            <person name="Inagaki H."/>
            <person name="Ikema Y."/>
            <person name="Okamoto S."/>
            <person name="Okitani R."/>
            <person name="Kawakami T."/>
            <person name="Noguchi S."/>
            <person name="Itoh T."/>
            <person name="Shigeta K."/>
            <person name="Senba T."/>
            <person name="Matsumura K."/>
            <person name="Nakajima Y."/>
            <person name="Mizuno T."/>
            <person name="Morinaga M."/>
            <person name="Sasaki M."/>
            <person name="Togashi T."/>
            <person name="Oyama M."/>
            <person name="Hata H."/>
            <person name="Watanabe M."/>
            <person name="Komatsu T."/>
            <person name="Mizushima-Sugano J."/>
            <person name="Satoh T."/>
            <person name="Shirai Y."/>
            <person name="Takahashi Y."/>
            <person name="Nakagawa K."/>
            <person name="Okumura K."/>
            <person name="Nagase T."/>
            <person name="Nomura N."/>
            <person name="Kikuchi H."/>
            <person name="Masuho Y."/>
            <person name="Yamashita R."/>
            <person name="Nakai K."/>
            <person name="Yada T."/>
            <person name="Nakamura Y."/>
            <person name="Ohara O."/>
            <person name="Isogai T."/>
            <person name="Sugano S."/>
        </authorList>
    </citation>
    <scope>NUCLEOTIDE SEQUENCE [LARGE SCALE MRNA]</scope>
</reference>
<reference key="3">
    <citation type="submission" date="2005-07" db="EMBL/GenBank/DDBJ databases">
        <authorList>
            <person name="Mural R.J."/>
            <person name="Istrail S."/>
            <person name="Sutton G.G."/>
            <person name="Florea L."/>
            <person name="Halpern A.L."/>
            <person name="Mobarry C.M."/>
            <person name="Lippert R."/>
            <person name="Walenz B."/>
            <person name="Shatkay H."/>
            <person name="Dew I."/>
            <person name="Miller J.R."/>
            <person name="Flanigan M.J."/>
            <person name="Edwards N.J."/>
            <person name="Bolanos R."/>
            <person name="Fasulo D."/>
            <person name="Halldorsson B.V."/>
            <person name="Hannenhalli S."/>
            <person name="Turner R."/>
            <person name="Yooseph S."/>
            <person name="Lu F."/>
            <person name="Nusskern D.R."/>
            <person name="Shue B.C."/>
            <person name="Zheng X.H."/>
            <person name="Zhong F."/>
            <person name="Delcher A.L."/>
            <person name="Huson D.H."/>
            <person name="Kravitz S.A."/>
            <person name="Mouchard L."/>
            <person name="Reinert K."/>
            <person name="Remington K.A."/>
            <person name="Clark A.G."/>
            <person name="Waterman M.S."/>
            <person name="Eichler E.E."/>
            <person name="Adams M.D."/>
            <person name="Hunkapiller M.W."/>
            <person name="Myers E.W."/>
            <person name="Venter J.C."/>
        </authorList>
    </citation>
    <scope>NUCLEOTIDE SEQUENCE [LARGE SCALE GENOMIC DNA]</scope>
</reference>
<reference key="4">
    <citation type="journal article" date="2004" name="Genome Res.">
        <title>The status, quality, and expansion of the NIH full-length cDNA project: the Mammalian Gene Collection (MGC).</title>
        <authorList>
            <consortium name="The MGC Project Team"/>
        </authorList>
    </citation>
    <scope>NUCLEOTIDE SEQUENCE [LARGE SCALE MRNA]</scope>
    <source>
        <tissue>Lung</tissue>
    </source>
</reference>
<reference key="5">
    <citation type="journal article" date="2008" name="Mol. Cell">
        <title>Kinase-selective enrichment enables quantitative phosphoproteomics of the kinome across the cell cycle.</title>
        <authorList>
            <person name="Daub H."/>
            <person name="Olsen J.V."/>
            <person name="Bairlein M."/>
            <person name="Gnad F."/>
            <person name="Oppermann F.S."/>
            <person name="Korner R."/>
            <person name="Greff Z."/>
            <person name="Keri G."/>
            <person name="Stemmann O."/>
            <person name="Mann M."/>
        </authorList>
    </citation>
    <scope>PHOSPHORYLATION [LARGE SCALE ANALYSIS] AT SER-917</scope>
    <scope>IDENTIFICATION BY MASS SPECTROMETRY [LARGE SCALE ANALYSIS]</scope>
    <source>
        <tissue>Cervix carcinoma</tissue>
    </source>
</reference>
<reference key="6">
    <citation type="journal article" date="2009" name="Dev. Cell">
        <title>The Arp2/3 activator WASH controls the fission of endosomes through a large multiprotein complex.</title>
        <authorList>
            <person name="Derivery E."/>
            <person name="Sousa C."/>
            <person name="Gautier J.J."/>
            <person name="Lombard B."/>
            <person name="Loew D."/>
            <person name="Gautreau A."/>
        </authorList>
    </citation>
    <scope>FUNCTION OF THE WASH COMPLEX</scope>
    <scope>IDENTIFICATION IN THE WASH COMPLEX</scope>
</reference>
<reference key="7">
    <citation type="journal article" date="2010" name="Brain">
        <title>Strumpellin is a novel valosin-containing protein binding partner linking hereditary spastic paraplegia to protein aggregation diseases.</title>
        <authorList>
            <person name="Clemen C.S."/>
            <person name="Tangavelou K."/>
            <person name="Strucksberg K.H."/>
            <person name="Just S."/>
            <person name="Gaertner L."/>
            <person name="Regus-Leidig H."/>
            <person name="Stumpf M."/>
            <person name="Reimann J."/>
            <person name="Coras R."/>
            <person name="Morgan R.O."/>
            <person name="Fernandez M.P."/>
            <person name="Hofmann A."/>
            <person name="Muller S."/>
            <person name="Schoser B."/>
            <person name="Hanisch F.G."/>
            <person name="Rottbauer W."/>
            <person name="Blumcke I."/>
            <person name="von Horsten S."/>
            <person name="Eichinger L."/>
            <person name="Schroder R."/>
        </authorList>
    </citation>
    <scope>SUBCELLULAR LOCATION</scope>
    <scope>TISSUE SPECIFICITY</scope>
    <scope>INTERACTION WITH VCP</scope>
    <scope>FUNCTION</scope>
    <scope>CHARACTERIZATION OF VARIANT SPG8 ASP-471</scope>
</reference>
<reference key="8">
    <citation type="journal article" date="2010" name="Proc. Natl. Acad. Sci. U.S.A.">
        <title>WASH and WAVE actin regulators of the Wiskott-Aldrich syndrome protein (WASP) family are controlled by analogous structurally related complexes.</title>
        <authorList>
            <person name="Jia D."/>
            <person name="Gomez T.S."/>
            <person name="Metlagel Z."/>
            <person name="Umetani J."/>
            <person name="Otwinowski Z."/>
            <person name="Rosen M.K."/>
            <person name="Billadeau D.D."/>
        </authorList>
    </citation>
    <scope>IDENTIFICATION IN THE WASH CORE COMPLEX</scope>
    <scope>FUNCTION OF THE WASH CORE COMPLEX</scope>
</reference>
<reference key="9">
    <citation type="journal article" date="2011" name="BMC Syst. Biol.">
        <title>Initial characterization of the human central proteome.</title>
        <authorList>
            <person name="Burkard T.R."/>
            <person name="Planyavsky M."/>
            <person name="Kaupe I."/>
            <person name="Breitwieser F.P."/>
            <person name="Buerckstuemmer T."/>
            <person name="Bennett K.L."/>
            <person name="Superti-Furga G."/>
            <person name="Colinge J."/>
        </authorList>
    </citation>
    <scope>IDENTIFICATION BY MASS SPECTROMETRY [LARGE SCALE ANALYSIS]</scope>
</reference>
<reference key="10">
    <citation type="journal article" date="2013" name="Biochim. Biophys. Acta">
        <title>The hereditary spastic paraplegia protein strumpellin: characterisation in neurons and of the effect of disease mutations on WASH complex assembly and function.</title>
        <authorList>
            <person name="Freeman C."/>
            <person name="Seaman M.N."/>
            <person name="Reid E."/>
        </authorList>
    </citation>
    <scope>FUNCTION</scope>
    <scope>SUBCELLULAR LOCATION</scope>
    <scope>CHARACTERIZATION OF VARIANTS SPG8 ASP-471; PHE-619 AND PHE-626</scope>
</reference>
<reference key="11">
    <citation type="journal article" date="2013" name="J. Med. Genet.">
        <title>A novel mutation in KIAA0196: identification of a gene involved in Ritscher-Schinzel/3C syndrome in a First Nations cohort.</title>
        <authorList>
            <person name="Elliott A.M."/>
            <person name="Simard L.R."/>
            <person name="Coghlan G."/>
            <person name="Chudley A.E."/>
            <person name="Chodirker B.N."/>
            <person name="Greenberg C.R."/>
            <person name="Burch T."/>
            <person name="Ly V."/>
            <person name="Hatch G.M."/>
            <person name="Zelinski T."/>
        </authorList>
    </citation>
    <scope>INVOLVEMENT IN RTSC1</scope>
</reference>
<reference key="12">
    <citation type="journal article" date="2013" name="J. Proteome Res.">
        <title>Toward a comprehensive characterization of a human cancer cell phosphoproteome.</title>
        <authorList>
            <person name="Zhou H."/>
            <person name="Di Palma S."/>
            <person name="Preisinger C."/>
            <person name="Peng M."/>
            <person name="Polat A.N."/>
            <person name="Heck A.J."/>
            <person name="Mohammed S."/>
        </authorList>
    </citation>
    <scope>PHOSPHORYLATION [LARGE SCALE ANALYSIS] AT SER-917</scope>
    <scope>IDENTIFICATION BY MASS SPECTROMETRY [LARGE SCALE ANALYSIS]</scope>
    <source>
        <tissue>Cervix carcinoma</tissue>
        <tissue>Erythroleukemia</tissue>
    </source>
</reference>
<reference key="13">
    <citation type="journal article" date="2013" name="Mol. Biol. Cell">
        <title>The WASH complex, an endosomal Arp2/3 activator, interacts with the Hermansky-Pudlak syndrome complex BLOC-1 and its cargo phosphatidylinositol-4-kinase type IIalpha.</title>
        <authorList>
            <person name="Ryder P.V."/>
            <person name="Vistein R."/>
            <person name="Gokhale A."/>
            <person name="Seaman M.N."/>
            <person name="Puthenveedu M.A."/>
            <person name="Faundez V."/>
        </authorList>
    </citation>
    <scope>FUNCTION</scope>
    <scope>SUBCELLULAR LOCATION</scope>
    <scope>INTERACTION WITH PI4K2A</scope>
</reference>
<reference key="14">
    <citation type="journal article" date="2015" name="Proteomics">
        <title>N-terminome analysis of the human mitochondrial proteome.</title>
        <authorList>
            <person name="Vaca Jacome A.S."/>
            <person name="Rabilloud T."/>
            <person name="Schaeffer-Reiss C."/>
            <person name="Rompais M."/>
            <person name="Ayoub D."/>
            <person name="Lane L."/>
            <person name="Bairoch A."/>
            <person name="Van Dorsselaer A."/>
            <person name="Carapito C."/>
        </authorList>
    </citation>
    <scope>IDENTIFICATION BY MASS SPECTROMETRY [LARGE SCALE ANALYSIS]</scope>
</reference>
<reference key="15">
    <citation type="journal article" date="2007" name="Am. J. Hum. Genet.">
        <title>Mutations in the KIAA0196 gene at the SPG8 locus cause hereditary spastic paraplegia.</title>
        <authorList>
            <person name="Valdmanis P.N."/>
            <person name="Meijer I.A."/>
            <person name="Reynolds A."/>
            <person name="Lei A."/>
            <person name="MacLeod P."/>
            <person name="Schlesinger D."/>
            <person name="Zatz M."/>
            <person name="Reid E."/>
            <person name="Dion P.A."/>
            <person name="Drapeau P."/>
            <person name="Rouleau G.A."/>
        </authorList>
    </citation>
    <scope>VARIANTS SPG8 ASP-471; PHE-619 AND PHE-626</scope>
    <scope>CHARACTERIZATION OF VARIANTS SPG8 PHE-619 AND PHE-626</scope>
</reference>
<reference key="16">
    <citation type="journal article" date="2013" name="J. Neurol.">
        <title>Exome sequencing expands the mutational spectrum of SPG8 in a family with spasticity responsive to L-DOPA treatment.</title>
        <authorList>
            <person name="Bettencourt C."/>
            <person name="Morris H.R."/>
            <person name="Singleton A.B."/>
            <person name="Hardy J."/>
            <person name="Houlden H."/>
        </authorList>
    </citation>
    <scope>VARIANT SPG8 THR-226</scope>
</reference>
<reference key="17">
    <citation type="journal article" date="2013" name="J. Neurol.">
        <title>Pure adult-onset Spastic Paraplegia caused by a novel mutation in the KIAA0196 (SPG8) gene.</title>
        <authorList>
            <person name="de Bot S.T."/>
            <person name="Vermeer S."/>
            <person name="Buijsman W."/>
            <person name="Heister A."/>
            <person name="Voorendt M."/>
            <person name="Verrips A."/>
            <person name="Scheffer H."/>
            <person name="Kremer H.P."/>
            <person name="van de Warrenburg B.P."/>
            <person name="Kamsteeg E.J."/>
        </authorList>
    </citation>
    <scope>VARIANT SPG8 ALA-696</scope>
</reference>
<reference key="18">
    <citation type="journal article" date="2014" name="J. Neurol. Sci.">
        <title>A novel strumpellin mutation and potential pitfalls in the molecular diagnosis of hereditary spastic paraplegia type SPG8.</title>
        <authorList>
            <person name="Jahic A."/>
            <person name="Kreuz F."/>
            <person name="Zacher P."/>
            <person name="Fiedler J."/>
            <person name="Bier A."/>
            <person name="Reif S."/>
            <person name="Rieger M."/>
            <person name="Krueger S."/>
            <person name="Beetz C."/>
            <person name="Plaschke J."/>
        </authorList>
    </citation>
    <scope>VARIANT SPG8 ALA-620</scope>
</reference>
<gene>
    <name evidence="12" type="primary">WASHC5</name>
    <name type="synonym">KIAA0196</name>
</gene>
<feature type="chain" id="PRO_0000050733" description="WASH complex subunit 5">
    <location>
        <begin position="1"/>
        <end position="1159"/>
    </location>
</feature>
<feature type="modified residue" description="Phosphoserine" evidence="13 14">
    <location>
        <position position="917"/>
    </location>
</feature>
<feature type="sequence variant" id="VAR_069984" description="In SPG8; dopamine responsive spasticity; dbSNP:rs755285830." evidence="8">
    <original>I</original>
    <variation>T</variation>
    <location>
        <position position="226"/>
    </location>
</feature>
<feature type="sequence variant" id="VAR_031955" description="In SPG8; does not alter subcellular distribution; no effect on its binding to VCP; no effect on assembly in the WASH complex; dbSNP:rs80338865." evidence="1 5">
    <original>N</original>
    <variation>D</variation>
    <location>
        <position position="471"/>
    </location>
</feature>
<feature type="sequence variant" id="VAR_031956" description="In SPG8; fails to rescue the curly phenotype in a zebrafish model; no effect on assembly in the WASH complex; dbSNP:rs80338866." evidence="1 5">
    <original>L</original>
    <variation>F</variation>
    <location>
        <position position="619"/>
    </location>
</feature>
<feature type="sequence variant" id="VAR_072417" description="In SPG8." evidence="10">
    <original>V</original>
    <variation>A</variation>
    <location>
        <position position="620"/>
    </location>
</feature>
<feature type="sequence variant" id="VAR_031957" description="In SPG8; fails to rescue the curly phenotype in a zebrafish model; no effect on assembly in the WASH complex; dbSNP:rs80338867." evidence="1 5">
    <original>V</original>
    <variation>F</variation>
    <location>
        <position position="626"/>
    </location>
</feature>
<feature type="sequence variant" id="VAR_069985" description="In SPG8; dbSNP:rs397515564." evidence="6">
    <original>G</original>
    <variation>A</variation>
    <location>
        <position position="696"/>
    </location>
</feature>
<feature type="sequence conflict" description="In Ref. 4; AAH26951." evidence="11" ref="4">
    <original>L</original>
    <variation>R</variation>
    <location>
        <position position="229"/>
    </location>
</feature>
<name>WASC5_HUMAN</name>
<proteinExistence type="evidence at protein level"/>
<organism>
    <name type="scientific">Homo sapiens</name>
    <name type="common">Human</name>
    <dbReference type="NCBI Taxonomy" id="9606"/>
    <lineage>
        <taxon>Eukaryota</taxon>
        <taxon>Metazoa</taxon>
        <taxon>Chordata</taxon>
        <taxon>Craniata</taxon>
        <taxon>Vertebrata</taxon>
        <taxon>Euteleostomi</taxon>
        <taxon>Mammalia</taxon>
        <taxon>Eutheria</taxon>
        <taxon>Euarchontoglires</taxon>
        <taxon>Primates</taxon>
        <taxon>Haplorrhini</taxon>
        <taxon>Catarrhini</taxon>
        <taxon>Hominidae</taxon>
        <taxon>Homo</taxon>
    </lineage>
</organism>
<evidence type="ECO:0000269" key="1">
    <source>
    </source>
</evidence>
<evidence type="ECO:0000269" key="2">
    <source>
    </source>
</evidence>
<evidence type="ECO:0000269" key="3">
    <source>
    </source>
</evidence>
<evidence type="ECO:0000269" key="4">
    <source>
    </source>
</evidence>
<evidence type="ECO:0000269" key="5">
    <source>
    </source>
</evidence>
<evidence type="ECO:0000269" key="6">
    <source>
    </source>
</evidence>
<evidence type="ECO:0000269" key="7">
    <source>
    </source>
</evidence>
<evidence type="ECO:0000269" key="8">
    <source>
    </source>
</evidence>
<evidence type="ECO:0000269" key="9">
    <source>
    </source>
</evidence>
<evidence type="ECO:0000269" key="10">
    <source>
    </source>
</evidence>
<evidence type="ECO:0000305" key="11"/>
<evidence type="ECO:0000312" key="12">
    <source>
        <dbReference type="HGNC" id="HGNC:28984"/>
    </source>
</evidence>
<evidence type="ECO:0007744" key="13">
    <source>
    </source>
</evidence>
<evidence type="ECO:0007744" key="14">
    <source>
    </source>
</evidence>